<reference key="1">
    <citation type="journal article" date="2008" name="PLoS Genet.">
        <title>Complete genome sequence of the N2-fixing broad host range endophyte Klebsiella pneumoniae 342 and virulence predictions verified in mice.</title>
        <authorList>
            <person name="Fouts D.E."/>
            <person name="Tyler H.L."/>
            <person name="DeBoy R.T."/>
            <person name="Daugherty S."/>
            <person name="Ren Q."/>
            <person name="Badger J.H."/>
            <person name="Durkin A.S."/>
            <person name="Huot H."/>
            <person name="Shrivastava S."/>
            <person name="Kothari S."/>
            <person name="Dodson R.J."/>
            <person name="Mohamoud Y."/>
            <person name="Khouri H."/>
            <person name="Roesch L.F.W."/>
            <person name="Krogfelt K.A."/>
            <person name="Struve C."/>
            <person name="Triplett E.W."/>
            <person name="Methe B.A."/>
        </authorList>
    </citation>
    <scope>NUCLEOTIDE SEQUENCE [LARGE SCALE GENOMIC DNA]</scope>
    <source>
        <strain>342</strain>
    </source>
</reference>
<dbReference type="EMBL" id="CP000964">
    <property type="protein sequence ID" value="ACI09375.1"/>
    <property type="molecule type" value="Genomic_DNA"/>
</dbReference>
<dbReference type="SMR" id="B5XU24"/>
<dbReference type="KEGG" id="kpe:KPK_0649"/>
<dbReference type="HOGENOM" id="CLU_072144_1_0_6"/>
<dbReference type="Proteomes" id="UP000001734">
    <property type="component" value="Chromosome"/>
</dbReference>
<dbReference type="GO" id="GO:0005737">
    <property type="term" value="C:cytoplasm"/>
    <property type="evidence" value="ECO:0007669"/>
    <property type="project" value="UniProtKB-SubCell"/>
</dbReference>
<dbReference type="GO" id="GO:0005525">
    <property type="term" value="F:GTP binding"/>
    <property type="evidence" value="ECO:0007669"/>
    <property type="project" value="UniProtKB-KW"/>
</dbReference>
<dbReference type="GO" id="GO:0003924">
    <property type="term" value="F:GTPase activity"/>
    <property type="evidence" value="ECO:0007669"/>
    <property type="project" value="InterPro"/>
</dbReference>
<dbReference type="GO" id="GO:0016151">
    <property type="term" value="F:nickel cation binding"/>
    <property type="evidence" value="ECO:0007669"/>
    <property type="project" value="UniProtKB-UniRule"/>
</dbReference>
<dbReference type="GO" id="GO:0043419">
    <property type="term" value="P:urea catabolic process"/>
    <property type="evidence" value="ECO:0007669"/>
    <property type="project" value="InterPro"/>
</dbReference>
<dbReference type="CDD" id="cd05540">
    <property type="entry name" value="UreG"/>
    <property type="match status" value="1"/>
</dbReference>
<dbReference type="FunFam" id="3.40.50.300:FF:000208">
    <property type="entry name" value="Urease accessory protein UreG"/>
    <property type="match status" value="1"/>
</dbReference>
<dbReference type="Gene3D" id="3.40.50.300">
    <property type="entry name" value="P-loop containing nucleotide triphosphate hydrolases"/>
    <property type="match status" value="1"/>
</dbReference>
<dbReference type="HAMAP" id="MF_01389">
    <property type="entry name" value="UreG"/>
    <property type="match status" value="1"/>
</dbReference>
<dbReference type="InterPro" id="IPR003495">
    <property type="entry name" value="CobW/HypB/UreG_nucleotide-bd"/>
</dbReference>
<dbReference type="InterPro" id="IPR027417">
    <property type="entry name" value="P-loop_NTPase"/>
</dbReference>
<dbReference type="InterPro" id="IPR004400">
    <property type="entry name" value="UreG"/>
</dbReference>
<dbReference type="NCBIfam" id="TIGR00101">
    <property type="entry name" value="ureG"/>
    <property type="match status" value="1"/>
</dbReference>
<dbReference type="PANTHER" id="PTHR31715">
    <property type="entry name" value="UREASE ACCESSORY PROTEIN G"/>
    <property type="match status" value="1"/>
</dbReference>
<dbReference type="PANTHER" id="PTHR31715:SF0">
    <property type="entry name" value="UREASE ACCESSORY PROTEIN G"/>
    <property type="match status" value="1"/>
</dbReference>
<dbReference type="Pfam" id="PF02492">
    <property type="entry name" value="cobW"/>
    <property type="match status" value="1"/>
</dbReference>
<dbReference type="PIRSF" id="PIRSF005624">
    <property type="entry name" value="Ni-bind_GTPase"/>
    <property type="match status" value="1"/>
</dbReference>
<dbReference type="SUPFAM" id="SSF52540">
    <property type="entry name" value="P-loop containing nucleoside triphosphate hydrolases"/>
    <property type="match status" value="1"/>
</dbReference>
<protein>
    <recommendedName>
        <fullName evidence="1">Urease accessory protein UreG</fullName>
    </recommendedName>
</protein>
<sequence>MNSYKHPLRVGVGGPVGSGKTALLEALCKAMRDTWQLAVVTNDIYTKEDQRILTEAGALAPERIVGVETGGCPHTAIREDASMNLAAVEALSEKFGNLDLIFVESGGDNLSATFSPELADLTIYVIDVAEGEKIPRKGGPGITKSDFLVINKTDLAPYVGASLEVMASDTQRMRGDRPWTFTNLKQGDGLSTIIAFLEDKGMLGK</sequence>
<name>UREG_KLEP3</name>
<gene>
    <name evidence="1" type="primary">ureG</name>
    <name type="ordered locus">KPK_0649</name>
</gene>
<evidence type="ECO:0000255" key="1">
    <source>
        <dbReference type="HAMAP-Rule" id="MF_01389"/>
    </source>
</evidence>
<feature type="chain" id="PRO_1000145182" description="Urease accessory protein UreG">
    <location>
        <begin position="1"/>
        <end position="205"/>
    </location>
</feature>
<feature type="binding site" evidence="1">
    <location>
        <begin position="14"/>
        <end position="21"/>
    </location>
    <ligand>
        <name>GTP</name>
        <dbReference type="ChEBI" id="CHEBI:37565"/>
    </ligand>
</feature>
<proteinExistence type="inferred from homology"/>
<accession>B5XU24</accession>
<organism>
    <name type="scientific">Klebsiella pneumoniae (strain 342)</name>
    <dbReference type="NCBI Taxonomy" id="507522"/>
    <lineage>
        <taxon>Bacteria</taxon>
        <taxon>Pseudomonadati</taxon>
        <taxon>Pseudomonadota</taxon>
        <taxon>Gammaproteobacteria</taxon>
        <taxon>Enterobacterales</taxon>
        <taxon>Enterobacteriaceae</taxon>
        <taxon>Klebsiella/Raoultella group</taxon>
        <taxon>Klebsiella</taxon>
        <taxon>Klebsiella pneumoniae complex</taxon>
    </lineage>
</organism>
<keyword id="KW-0143">Chaperone</keyword>
<keyword id="KW-0963">Cytoplasm</keyword>
<keyword id="KW-0342">GTP-binding</keyword>
<keyword id="KW-0996">Nickel insertion</keyword>
<keyword id="KW-0547">Nucleotide-binding</keyword>
<comment type="function">
    <text evidence="1">Facilitates the functional incorporation of the urease nickel metallocenter. This process requires GTP hydrolysis, probably effectuated by UreG.</text>
</comment>
<comment type="subunit">
    <text evidence="1">Homodimer. UreD, UreF and UreG form a complex that acts as a GTP-hydrolysis-dependent molecular chaperone, activating the urease apoprotein by helping to assemble the nickel containing metallocenter of UreC. The UreE protein probably delivers the nickel.</text>
</comment>
<comment type="subcellular location">
    <subcellularLocation>
        <location evidence="1">Cytoplasm</location>
    </subcellularLocation>
</comment>
<comment type="similarity">
    <text evidence="1">Belongs to the SIMIBI class G3E GTPase family. UreG subfamily.</text>
</comment>